<reference key="1">
    <citation type="journal article" date="2007" name="Mol. Biol. Evol.">
        <title>Plastid genome sequence of the cryptophyte alga Rhodomonas salina CCMP1319: lateral transfer of putative DNA replication machinery and a test of chromist plastid phylogeny.</title>
        <authorList>
            <person name="Khan H."/>
            <person name="Parks N."/>
            <person name="Kozera C."/>
            <person name="Curtis B.A."/>
            <person name="Parsons B.J."/>
            <person name="Bowman S."/>
            <person name="Archibald J.M."/>
        </authorList>
    </citation>
    <scope>NUCLEOTIDE SEQUENCE [LARGE SCALE GENOMIC DNA]</scope>
    <source>
        <strain>CCMP1319 / NEPCC76 / CS-174</strain>
    </source>
</reference>
<keyword id="KW-0002">3D-structure</keyword>
<keyword id="KW-0150">Chloroplast</keyword>
<keyword id="KW-0472">Membrane</keyword>
<keyword id="KW-0602">Photosynthesis</keyword>
<keyword id="KW-0604">Photosystem II</keyword>
<keyword id="KW-0934">Plastid</keyword>
<keyword id="KW-0674">Reaction center</keyword>
<keyword id="KW-0793">Thylakoid</keyword>
<keyword id="KW-0812">Transmembrane</keyword>
<keyword id="KW-1133">Transmembrane helix</keyword>
<gene>
    <name evidence="1" type="primary">psbI</name>
</gene>
<feature type="chain" id="PRO_0000353246" description="Photosystem II reaction center protein I">
    <location>
        <begin position="1"/>
        <end position="38"/>
    </location>
</feature>
<feature type="transmembrane region" description="Helical" evidence="1">
    <location>
        <begin position="6"/>
        <end position="25"/>
    </location>
</feature>
<feature type="helix" evidence="2">
    <location>
        <begin position="2"/>
        <end position="23"/>
    </location>
</feature>
<feature type="turn" evidence="2">
    <location>
        <begin position="24"/>
        <end position="26"/>
    </location>
</feature>
<feature type="helix" evidence="2">
    <location>
        <begin position="27"/>
        <end position="29"/>
    </location>
</feature>
<accession>A6MVW0</accession>
<organism>
    <name type="scientific">Rhodomonas salina</name>
    <name type="common">Cryptomonas salina</name>
    <dbReference type="NCBI Taxonomy" id="52970"/>
    <lineage>
        <taxon>Eukaryota</taxon>
        <taxon>Cryptophyceae</taxon>
        <taxon>Pyrenomonadales</taxon>
        <taxon>Pyrenomonadaceae</taxon>
        <taxon>Rhodomonas</taxon>
    </lineage>
</organism>
<dbReference type="EMBL" id="EF508371">
    <property type="protein sequence ID" value="ABO70823.1"/>
    <property type="molecule type" value="Genomic_DNA"/>
</dbReference>
<dbReference type="RefSeq" id="YP_001293539.1">
    <property type="nucleotide sequence ID" value="NC_009573.1"/>
</dbReference>
<dbReference type="PDB" id="8XLP">
    <property type="method" value="EM"/>
    <property type="resolution" value="2.57 A"/>
    <property type="chains" value="I/i=1-38"/>
</dbReference>
<dbReference type="PDBsum" id="8XLP"/>
<dbReference type="EMDB" id="EMD-38455"/>
<dbReference type="SMR" id="A6MVW0"/>
<dbReference type="GeneID" id="5228550"/>
<dbReference type="GO" id="GO:0009535">
    <property type="term" value="C:chloroplast thylakoid membrane"/>
    <property type="evidence" value="ECO:0007669"/>
    <property type="project" value="UniProtKB-SubCell"/>
</dbReference>
<dbReference type="GO" id="GO:0009539">
    <property type="term" value="C:photosystem II reaction center"/>
    <property type="evidence" value="ECO:0007669"/>
    <property type="project" value="InterPro"/>
</dbReference>
<dbReference type="GO" id="GO:0015979">
    <property type="term" value="P:photosynthesis"/>
    <property type="evidence" value="ECO:0007669"/>
    <property type="project" value="UniProtKB-UniRule"/>
</dbReference>
<dbReference type="HAMAP" id="MF_01316">
    <property type="entry name" value="PSII_PsbI"/>
    <property type="match status" value="1"/>
</dbReference>
<dbReference type="InterPro" id="IPR003686">
    <property type="entry name" value="PSII_PsbI"/>
</dbReference>
<dbReference type="InterPro" id="IPR037271">
    <property type="entry name" value="PSII_PsbI_sf"/>
</dbReference>
<dbReference type="NCBIfam" id="NF002735">
    <property type="entry name" value="PRK02655.1"/>
    <property type="match status" value="1"/>
</dbReference>
<dbReference type="PANTHER" id="PTHR35772">
    <property type="entry name" value="PHOTOSYSTEM II REACTION CENTER PROTEIN I"/>
    <property type="match status" value="1"/>
</dbReference>
<dbReference type="PANTHER" id="PTHR35772:SF1">
    <property type="entry name" value="PHOTOSYSTEM II REACTION CENTER PROTEIN I"/>
    <property type="match status" value="1"/>
</dbReference>
<dbReference type="Pfam" id="PF02532">
    <property type="entry name" value="PsbI"/>
    <property type="match status" value="1"/>
</dbReference>
<dbReference type="SUPFAM" id="SSF161041">
    <property type="entry name" value="Photosystem II reaction center protein I, PsbI"/>
    <property type="match status" value="1"/>
</dbReference>
<name>PSBI_RHDSA</name>
<proteinExistence type="evidence at protein level"/>
<protein>
    <recommendedName>
        <fullName evidence="1">Photosystem II reaction center protein I</fullName>
        <shortName evidence="1">PSII-I</shortName>
    </recommendedName>
    <alternativeName>
        <fullName evidence="1">PSII 4.8 kDa protein</fullName>
    </alternativeName>
</protein>
<geneLocation type="chloroplast"/>
<evidence type="ECO:0000255" key="1">
    <source>
        <dbReference type="HAMAP-Rule" id="MF_01316"/>
    </source>
</evidence>
<evidence type="ECO:0007829" key="2">
    <source>
        <dbReference type="PDB" id="8XLP"/>
    </source>
</evidence>
<comment type="function">
    <text evidence="1">One of the components of the core complex of photosystem II (PSII), required for its stability and/or assembly. PSII is a light-driven water:plastoquinone oxidoreductase that uses light energy to abstract electrons from H(2)O, generating O(2) and a proton gradient subsequently used for ATP formation. It consists of a core antenna complex that captures photons, and an electron transfer chain that converts photonic excitation into a charge separation.</text>
</comment>
<comment type="subunit">
    <text evidence="1">PSII is composed of 1 copy each of membrane proteins PsbA, PsbB, PsbC, PsbD, PsbE, PsbF, PsbH, PsbI, PsbJ, PsbK, PsbL, PsbM, PsbT, PsbX, PsbY, PsbZ, Psb30/Ycf12, at least 3 peripheral proteins of the oxygen-evolving complex and a large number of cofactors. It forms dimeric complexes.</text>
</comment>
<comment type="subcellular location">
    <subcellularLocation>
        <location evidence="1">Plastid</location>
        <location evidence="1">Chloroplast thylakoid membrane</location>
        <topology evidence="1">Single-pass membrane protein</topology>
    </subcellularLocation>
</comment>
<comment type="similarity">
    <text evidence="1">Belongs to the PsbI family.</text>
</comment>
<sequence>MFTLKIVVYTTVTLFVSLFTFGFLSNDASRNPNRKDLE</sequence>